<keyword id="KW-0963">Cytoplasm</keyword>
<keyword id="KW-0269">Exonuclease</keyword>
<keyword id="KW-0378">Hydrolase</keyword>
<keyword id="KW-0540">Nuclease</keyword>
<keyword id="KW-1185">Reference proteome</keyword>
<accession>Q8DVB4</accession>
<protein>
    <recommendedName>
        <fullName evidence="1">Exodeoxyribonuclease 7 small subunit</fullName>
        <ecNumber evidence="1">3.1.11.6</ecNumber>
    </recommendedName>
    <alternativeName>
        <fullName evidence="1">Exodeoxyribonuclease VII small subunit</fullName>
        <shortName evidence="1">Exonuclease VII small subunit</shortName>
    </alternativeName>
</protein>
<reference key="1">
    <citation type="journal article" date="2002" name="Proc. Natl. Acad. Sci. U.S.A.">
        <title>Genome sequence of Streptococcus mutans UA159, a cariogenic dental pathogen.</title>
        <authorList>
            <person name="Ajdic D.J."/>
            <person name="McShan W.M."/>
            <person name="McLaughlin R.E."/>
            <person name="Savic G."/>
            <person name="Chang J."/>
            <person name="Carson M.B."/>
            <person name="Primeaux C."/>
            <person name="Tian R."/>
            <person name="Kenton S."/>
            <person name="Jia H.G."/>
            <person name="Lin S.P."/>
            <person name="Qian Y."/>
            <person name="Li S."/>
            <person name="Zhu H."/>
            <person name="Najar F.Z."/>
            <person name="Lai H."/>
            <person name="White J."/>
            <person name="Roe B.A."/>
            <person name="Ferretti J.J."/>
        </authorList>
    </citation>
    <scope>NUCLEOTIDE SEQUENCE [LARGE SCALE GENOMIC DNA]</scope>
    <source>
        <strain>ATCC 700610 / UA159</strain>
    </source>
</reference>
<proteinExistence type="inferred from homology"/>
<organism>
    <name type="scientific">Streptococcus mutans serotype c (strain ATCC 700610 / UA159)</name>
    <dbReference type="NCBI Taxonomy" id="210007"/>
    <lineage>
        <taxon>Bacteria</taxon>
        <taxon>Bacillati</taxon>
        <taxon>Bacillota</taxon>
        <taxon>Bacilli</taxon>
        <taxon>Lactobacillales</taxon>
        <taxon>Streptococcaceae</taxon>
        <taxon>Streptococcus</taxon>
    </lineage>
</organism>
<feature type="chain" id="PRO_0000207015" description="Exodeoxyribonuclease 7 small subunit">
    <location>
        <begin position="1"/>
        <end position="73"/>
    </location>
</feature>
<gene>
    <name evidence="1" type="primary">xseB</name>
    <name type="ordered locus">SMU_581</name>
</gene>
<evidence type="ECO:0000255" key="1">
    <source>
        <dbReference type="HAMAP-Rule" id="MF_00337"/>
    </source>
</evidence>
<comment type="function">
    <text evidence="1">Bidirectionally degrades single-stranded DNA into large acid-insoluble oligonucleotides, which are then degraded further into small acid-soluble oligonucleotides.</text>
</comment>
<comment type="catalytic activity">
    <reaction evidence="1">
        <text>Exonucleolytic cleavage in either 5'- to 3'- or 3'- to 5'-direction to yield nucleoside 5'-phosphates.</text>
        <dbReference type="EC" id="3.1.11.6"/>
    </reaction>
</comment>
<comment type="subunit">
    <text evidence="1">Heterooligomer composed of large and small subunits.</text>
</comment>
<comment type="subcellular location">
    <subcellularLocation>
        <location evidence="1">Cytoplasm</location>
    </subcellularLocation>
</comment>
<comment type="similarity">
    <text evidence="1">Belongs to the XseB family.</text>
</comment>
<sequence>MSNKKKTFEENLQDLEEIVNQLETGEIPLEEAITQFQKGMALSKDLQKTLESAEKTLVKVMQADGSEAEMDEL</sequence>
<dbReference type="EC" id="3.1.11.6" evidence="1"/>
<dbReference type="EMBL" id="AE014133">
    <property type="protein sequence ID" value="AAN58320.1"/>
    <property type="molecule type" value="Genomic_DNA"/>
</dbReference>
<dbReference type="RefSeq" id="NP_721014.1">
    <property type="nucleotide sequence ID" value="NC_004350.2"/>
</dbReference>
<dbReference type="RefSeq" id="WP_002262107.1">
    <property type="nucleotide sequence ID" value="NC_004350.2"/>
</dbReference>
<dbReference type="SMR" id="Q8DVB4"/>
<dbReference type="STRING" id="210007.SMU_581"/>
<dbReference type="DNASU" id="1029448"/>
<dbReference type="KEGG" id="smu:SMU_581"/>
<dbReference type="PATRIC" id="fig|210007.7.peg.514"/>
<dbReference type="eggNOG" id="COG1722">
    <property type="taxonomic scope" value="Bacteria"/>
</dbReference>
<dbReference type="HOGENOM" id="CLU_145918_3_2_9"/>
<dbReference type="OrthoDB" id="9798666at2"/>
<dbReference type="PhylomeDB" id="Q8DVB4"/>
<dbReference type="Proteomes" id="UP000002512">
    <property type="component" value="Chromosome"/>
</dbReference>
<dbReference type="GO" id="GO:0005829">
    <property type="term" value="C:cytosol"/>
    <property type="evidence" value="ECO:0007669"/>
    <property type="project" value="TreeGrafter"/>
</dbReference>
<dbReference type="GO" id="GO:0009318">
    <property type="term" value="C:exodeoxyribonuclease VII complex"/>
    <property type="evidence" value="ECO:0007669"/>
    <property type="project" value="InterPro"/>
</dbReference>
<dbReference type="GO" id="GO:0008855">
    <property type="term" value="F:exodeoxyribonuclease VII activity"/>
    <property type="evidence" value="ECO:0007669"/>
    <property type="project" value="UniProtKB-UniRule"/>
</dbReference>
<dbReference type="GO" id="GO:0006308">
    <property type="term" value="P:DNA catabolic process"/>
    <property type="evidence" value="ECO:0007669"/>
    <property type="project" value="UniProtKB-UniRule"/>
</dbReference>
<dbReference type="Gene3D" id="1.10.287.1040">
    <property type="entry name" value="Exonuclease VII, small subunit"/>
    <property type="match status" value="1"/>
</dbReference>
<dbReference type="HAMAP" id="MF_00337">
    <property type="entry name" value="Exonuc_7_S"/>
    <property type="match status" value="1"/>
</dbReference>
<dbReference type="InterPro" id="IPR003761">
    <property type="entry name" value="Exonuc_VII_S"/>
</dbReference>
<dbReference type="InterPro" id="IPR037004">
    <property type="entry name" value="Exonuc_VII_ssu_sf"/>
</dbReference>
<dbReference type="NCBIfam" id="NF002138">
    <property type="entry name" value="PRK00977.1-2"/>
    <property type="match status" value="1"/>
</dbReference>
<dbReference type="NCBIfam" id="TIGR01280">
    <property type="entry name" value="xseB"/>
    <property type="match status" value="1"/>
</dbReference>
<dbReference type="PANTHER" id="PTHR34137">
    <property type="entry name" value="EXODEOXYRIBONUCLEASE 7 SMALL SUBUNIT"/>
    <property type="match status" value="1"/>
</dbReference>
<dbReference type="PANTHER" id="PTHR34137:SF1">
    <property type="entry name" value="EXODEOXYRIBONUCLEASE 7 SMALL SUBUNIT"/>
    <property type="match status" value="1"/>
</dbReference>
<dbReference type="Pfam" id="PF02609">
    <property type="entry name" value="Exonuc_VII_S"/>
    <property type="match status" value="1"/>
</dbReference>
<dbReference type="PIRSF" id="PIRSF006488">
    <property type="entry name" value="Exonuc_VII_S"/>
    <property type="match status" value="1"/>
</dbReference>
<dbReference type="SUPFAM" id="SSF116842">
    <property type="entry name" value="XseB-like"/>
    <property type="match status" value="1"/>
</dbReference>
<name>EX7S_STRMU</name>